<proteinExistence type="inferred from homology"/>
<protein>
    <recommendedName>
        <fullName>Oxygen-dependent coproporphyrinogen-III oxidase</fullName>
        <shortName>Coprogen oxidase</shortName>
        <shortName>Coproporphyrinogenase</shortName>
        <ecNumber>1.3.3.3</ecNumber>
    </recommendedName>
</protein>
<organism>
    <name type="scientific">Dictyostelium discoideum</name>
    <name type="common">Social amoeba</name>
    <dbReference type="NCBI Taxonomy" id="44689"/>
    <lineage>
        <taxon>Eukaryota</taxon>
        <taxon>Amoebozoa</taxon>
        <taxon>Evosea</taxon>
        <taxon>Eumycetozoa</taxon>
        <taxon>Dictyostelia</taxon>
        <taxon>Dictyosteliales</taxon>
        <taxon>Dictyosteliaceae</taxon>
        <taxon>Dictyostelium</taxon>
    </lineage>
</organism>
<keyword id="KW-0350">Heme biosynthesis</keyword>
<keyword id="KW-0560">Oxidoreductase</keyword>
<keyword id="KW-0627">Porphyrin biosynthesis</keyword>
<keyword id="KW-1185">Reference proteome</keyword>
<reference key="1">
    <citation type="journal article" date="2005" name="Nature">
        <title>The genome of the social amoeba Dictyostelium discoideum.</title>
        <authorList>
            <person name="Eichinger L."/>
            <person name="Pachebat J.A."/>
            <person name="Gloeckner G."/>
            <person name="Rajandream M.A."/>
            <person name="Sucgang R."/>
            <person name="Berriman M."/>
            <person name="Song J."/>
            <person name="Olsen R."/>
            <person name="Szafranski K."/>
            <person name="Xu Q."/>
            <person name="Tunggal B."/>
            <person name="Kummerfeld S."/>
            <person name="Madera M."/>
            <person name="Konfortov B.A."/>
            <person name="Rivero F."/>
            <person name="Bankier A.T."/>
            <person name="Lehmann R."/>
            <person name="Hamlin N."/>
            <person name="Davies R."/>
            <person name="Gaudet P."/>
            <person name="Fey P."/>
            <person name="Pilcher K."/>
            <person name="Chen G."/>
            <person name="Saunders D."/>
            <person name="Sodergren E.J."/>
            <person name="Davis P."/>
            <person name="Kerhornou A."/>
            <person name="Nie X."/>
            <person name="Hall N."/>
            <person name="Anjard C."/>
            <person name="Hemphill L."/>
            <person name="Bason N."/>
            <person name="Farbrother P."/>
            <person name="Desany B."/>
            <person name="Just E."/>
            <person name="Morio T."/>
            <person name="Rost R."/>
            <person name="Churcher C.M."/>
            <person name="Cooper J."/>
            <person name="Haydock S."/>
            <person name="van Driessche N."/>
            <person name="Cronin A."/>
            <person name="Goodhead I."/>
            <person name="Muzny D.M."/>
            <person name="Mourier T."/>
            <person name="Pain A."/>
            <person name="Lu M."/>
            <person name="Harper D."/>
            <person name="Lindsay R."/>
            <person name="Hauser H."/>
            <person name="James K.D."/>
            <person name="Quiles M."/>
            <person name="Madan Babu M."/>
            <person name="Saito T."/>
            <person name="Buchrieser C."/>
            <person name="Wardroper A."/>
            <person name="Felder M."/>
            <person name="Thangavelu M."/>
            <person name="Johnson D."/>
            <person name="Knights A."/>
            <person name="Loulseged H."/>
            <person name="Mungall K.L."/>
            <person name="Oliver K."/>
            <person name="Price C."/>
            <person name="Quail M.A."/>
            <person name="Urushihara H."/>
            <person name="Hernandez J."/>
            <person name="Rabbinowitsch E."/>
            <person name="Steffen D."/>
            <person name="Sanders M."/>
            <person name="Ma J."/>
            <person name="Kohara Y."/>
            <person name="Sharp S."/>
            <person name="Simmonds M.N."/>
            <person name="Spiegler S."/>
            <person name="Tivey A."/>
            <person name="Sugano S."/>
            <person name="White B."/>
            <person name="Walker D."/>
            <person name="Woodward J.R."/>
            <person name="Winckler T."/>
            <person name="Tanaka Y."/>
            <person name="Shaulsky G."/>
            <person name="Schleicher M."/>
            <person name="Weinstock G.M."/>
            <person name="Rosenthal A."/>
            <person name="Cox E.C."/>
            <person name="Chisholm R.L."/>
            <person name="Gibbs R.A."/>
            <person name="Loomis W.F."/>
            <person name="Platzer M."/>
            <person name="Kay R.R."/>
            <person name="Williams J.G."/>
            <person name="Dear P.H."/>
            <person name="Noegel A.A."/>
            <person name="Barrell B.G."/>
            <person name="Kuspa A."/>
        </authorList>
    </citation>
    <scope>NUCLEOTIDE SEQUENCE [LARGE SCALE GENOMIC DNA]</scope>
    <source>
        <strain>AX4</strain>
    </source>
</reference>
<sequence length="332" mass="38266">MTSTNEPIPTEEEIKNGFKFIQDEICKFLITTTGGHQQYSEDKWDYTKGSGGGISRVWEGKEEEGFYLNQDYQSQNNKCDKIEKGGVNFSYIVGSNLPSAAATQFKIAPDTKYIATGVSLVIHPYNPNVPTIHMNVRYFEAGDVWWFGGGVDLTPVYPKLDQVVEFHSTLKKVCDQYGQEENKTSYALGKAECDSYFFLPHRGETRGVGGLFFDHLKSDKAKTWKFIYQLGLSFIDLYKPFLVNNSSISYDKVQREYQLYRRSRYVEFNLLFDRGTKFGILSEGRTESILMSLPAVCKWKYNYKPEENTPEANLLTFLRPRDWLNENQENKN</sequence>
<feature type="chain" id="PRO_0000328892" description="Oxygen-dependent coproporphyrinogen-III oxidase">
    <location>
        <begin position="1"/>
        <end position="332"/>
    </location>
</feature>
<feature type="active site" description="Proton donor" evidence="1">
    <location>
        <position position="133"/>
    </location>
</feature>
<feature type="binding site" evidence="1">
    <location>
        <position position="119"/>
    </location>
    <ligand>
        <name>coproporphyrinogen III</name>
        <dbReference type="ChEBI" id="CHEBI:57309"/>
    </ligand>
</feature>
<feature type="binding site" evidence="1">
    <location>
        <begin position="135"/>
        <end position="137"/>
    </location>
    <ligand>
        <name>coproporphyrinogen III</name>
        <dbReference type="ChEBI" id="CHEBI:57309"/>
    </ligand>
</feature>
<feature type="binding site" evidence="1">
    <location>
        <begin position="284"/>
        <end position="285"/>
    </location>
    <ligand>
        <name>coproporphyrinogen III</name>
        <dbReference type="ChEBI" id="CHEBI:57309"/>
    </ligand>
</feature>
<comment type="function">
    <text evidence="1">Involved in the heme biosynthesis. Catalyzes the aerobic oxidative decarboxylation of propionate groups of rings A and B of coproporphyrinogen-III to yield the vinyl groups in protoporphyrinogen-IX (By similarity).</text>
</comment>
<comment type="catalytic activity">
    <reaction evidence="1">
        <text>coproporphyrinogen III + O2 + 2 H(+) = protoporphyrinogen IX + 2 CO2 + 2 H2O</text>
        <dbReference type="Rhea" id="RHEA:18257"/>
        <dbReference type="ChEBI" id="CHEBI:15377"/>
        <dbReference type="ChEBI" id="CHEBI:15378"/>
        <dbReference type="ChEBI" id="CHEBI:15379"/>
        <dbReference type="ChEBI" id="CHEBI:16526"/>
        <dbReference type="ChEBI" id="CHEBI:57307"/>
        <dbReference type="ChEBI" id="CHEBI:57309"/>
        <dbReference type="EC" id="1.3.3.3"/>
    </reaction>
</comment>
<comment type="pathway">
    <text evidence="1">Porphyrin-containing compound metabolism; protoporphyrin-IX biosynthesis; protoporphyrinogen-IX from coproporphyrinogen-III (O2 route): step 1/1.</text>
</comment>
<comment type="subunit">
    <text evidence="1">Homodimer.</text>
</comment>
<comment type="similarity">
    <text evidence="2">Belongs to the aerobic coproporphyrinogen-III oxidase family.</text>
</comment>
<name>HEM6_DICDI</name>
<gene>
    <name type="primary">cpox</name>
    <name type="synonym">hemF</name>
    <name type="ORF">DDB_G0288893</name>
</gene>
<dbReference type="EC" id="1.3.3.3"/>
<dbReference type="EMBL" id="AAFI02000126">
    <property type="protein sequence ID" value="EAL62970.1"/>
    <property type="molecule type" value="Genomic_DNA"/>
</dbReference>
<dbReference type="RefSeq" id="XP_636472.1">
    <property type="nucleotide sequence ID" value="XM_631380.1"/>
</dbReference>
<dbReference type="SMR" id="Q54IA7"/>
<dbReference type="FunCoup" id="Q54IA7">
    <property type="interactions" value="264"/>
</dbReference>
<dbReference type="STRING" id="44689.Q54IA7"/>
<dbReference type="PaxDb" id="44689-DDB0231414"/>
<dbReference type="EnsemblProtists" id="EAL62970">
    <property type="protein sequence ID" value="EAL62970"/>
    <property type="gene ID" value="DDB_G0288893"/>
</dbReference>
<dbReference type="GeneID" id="8626855"/>
<dbReference type="KEGG" id="ddi:DDB_G0288893"/>
<dbReference type="dictyBase" id="DDB_G0288893">
    <property type="gene designation" value="hemF"/>
</dbReference>
<dbReference type="VEuPathDB" id="AmoebaDB:DDB_G0288893"/>
<dbReference type="eggNOG" id="KOG1518">
    <property type="taxonomic scope" value="Eukaryota"/>
</dbReference>
<dbReference type="HOGENOM" id="CLU_026169_0_1_1"/>
<dbReference type="InParanoid" id="Q54IA7"/>
<dbReference type="OMA" id="NTPYTEQ"/>
<dbReference type="PhylomeDB" id="Q54IA7"/>
<dbReference type="Reactome" id="R-DDI-189451">
    <property type="pathway name" value="Heme biosynthesis"/>
</dbReference>
<dbReference type="UniPathway" id="UPA00251">
    <property type="reaction ID" value="UER00322"/>
</dbReference>
<dbReference type="PRO" id="PR:Q54IA7"/>
<dbReference type="Proteomes" id="UP000002195">
    <property type="component" value="Chromosome 5"/>
</dbReference>
<dbReference type="GO" id="GO:0005737">
    <property type="term" value="C:cytoplasm"/>
    <property type="evidence" value="ECO:0000318"/>
    <property type="project" value="GO_Central"/>
</dbReference>
<dbReference type="GO" id="GO:0004109">
    <property type="term" value="F:coproporphyrinogen oxidase activity"/>
    <property type="evidence" value="ECO:0000318"/>
    <property type="project" value="GO_Central"/>
</dbReference>
<dbReference type="GO" id="GO:0006782">
    <property type="term" value="P:protoporphyrinogen IX biosynthetic process"/>
    <property type="evidence" value="ECO:0000318"/>
    <property type="project" value="GO_Central"/>
</dbReference>
<dbReference type="FunFam" id="3.40.1500.10:FF:000011">
    <property type="entry name" value="Coproporphyrinogen III oxidase"/>
    <property type="match status" value="1"/>
</dbReference>
<dbReference type="Gene3D" id="3.40.1500.10">
    <property type="entry name" value="Coproporphyrinogen III oxidase, aerobic"/>
    <property type="match status" value="1"/>
</dbReference>
<dbReference type="InterPro" id="IPR001260">
    <property type="entry name" value="Coprogen_oxidase_aer"/>
</dbReference>
<dbReference type="InterPro" id="IPR036406">
    <property type="entry name" value="Coprogen_oxidase_aer_sf"/>
</dbReference>
<dbReference type="NCBIfam" id="NF003727">
    <property type="entry name" value="PRK05330.1"/>
    <property type="match status" value="1"/>
</dbReference>
<dbReference type="PANTHER" id="PTHR10755">
    <property type="entry name" value="COPROPORPHYRINOGEN III OXIDASE, MITOCHONDRIAL"/>
    <property type="match status" value="1"/>
</dbReference>
<dbReference type="PANTHER" id="PTHR10755:SF0">
    <property type="entry name" value="OXYGEN-DEPENDENT COPROPORPHYRINOGEN-III OXIDASE, MITOCHONDRIAL"/>
    <property type="match status" value="1"/>
</dbReference>
<dbReference type="Pfam" id="PF01218">
    <property type="entry name" value="Coprogen_oxidas"/>
    <property type="match status" value="1"/>
</dbReference>
<dbReference type="PIRSF" id="PIRSF000166">
    <property type="entry name" value="Coproporphyri_ox"/>
    <property type="match status" value="1"/>
</dbReference>
<dbReference type="PRINTS" id="PR00073">
    <property type="entry name" value="COPRGNOXDASE"/>
</dbReference>
<dbReference type="SUPFAM" id="SSF102886">
    <property type="entry name" value="Coproporphyrinogen III oxidase"/>
    <property type="match status" value="1"/>
</dbReference>
<evidence type="ECO:0000250" key="1">
    <source>
        <dbReference type="UniProtKB" id="P36551"/>
    </source>
</evidence>
<evidence type="ECO:0000305" key="2"/>
<accession>Q54IA7</accession>